<name>COAA_CORA7</name>
<proteinExistence type="inferred from homology"/>
<organism>
    <name type="scientific">Corynebacterium aurimucosum (strain ATCC 700975 / DSM 44827 / CIP 107346 / CN-1)</name>
    <name type="common">Corynebacterium nigricans</name>
    <dbReference type="NCBI Taxonomy" id="548476"/>
    <lineage>
        <taxon>Bacteria</taxon>
        <taxon>Bacillati</taxon>
        <taxon>Actinomycetota</taxon>
        <taxon>Actinomycetes</taxon>
        <taxon>Mycobacteriales</taxon>
        <taxon>Corynebacteriaceae</taxon>
        <taxon>Corynebacterium</taxon>
    </lineage>
</organism>
<comment type="catalytic activity">
    <reaction evidence="1">
        <text>(R)-pantothenate + ATP = (R)-4'-phosphopantothenate + ADP + H(+)</text>
        <dbReference type="Rhea" id="RHEA:16373"/>
        <dbReference type="ChEBI" id="CHEBI:10986"/>
        <dbReference type="ChEBI" id="CHEBI:15378"/>
        <dbReference type="ChEBI" id="CHEBI:29032"/>
        <dbReference type="ChEBI" id="CHEBI:30616"/>
        <dbReference type="ChEBI" id="CHEBI:456216"/>
        <dbReference type="EC" id="2.7.1.33"/>
    </reaction>
</comment>
<comment type="pathway">
    <text evidence="1">Cofactor biosynthesis; coenzyme A biosynthesis; CoA from (R)-pantothenate: step 1/5.</text>
</comment>
<comment type="subcellular location">
    <subcellularLocation>
        <location evidence="1">Cytoplasm</location>
    </subcellularLocation>
</comment>
<comment type="similarity">
    <text evidence="1">Belongs to the prokaryotic pantothenate kinase family.</text>
</comment>
<accession>C3PFC1</accession>
<sequence length="308" mass="35178">MARMTDASPYLDFDRDTWRALRKSMPQVLTANEVEKLRGIGDRIDLTEVAEVYLPLSRLIHMQVEARQKLTAATEAFLGNPPTHVPFVIGVAGSVAVGKSTTARLLQVLLERWESHPKVDLVTTDGFLYPTAYLKEHGLMQRKGYPESYDRRALMRFVTDVKSGKPLVTAPLYSHVSYDIVPGEFQEVRQPDILILEGLNVLQTGPTLMVSDLFDFSVYVDARVDDIEKWYIDRFLKLRHTAFREPGAHFASFADMTDEEAYVQAREIWQSINLPNLIENILPTRVRASLVLRKGSHHLVDRVRMRKL</sequence>
<feature type="chain" id="PRO_1000124796" description="Pantothenate kinase">
    <location>
        <begin position="1"/>
        <end position="308"/>
    </location>
</feature>
<feature type="binding site" evidence="1">
    <location>
        <begin position="93"/>
        <end position="100"/>
    </location>
    <ligand>
        <name>ATP</name>
        <dbReference type="ChEBI" id="CHEBI:30616"/>
    </ligand>
</feature>
<keyword id="KW-0067">ATP-binding</keyword>
<keyword id="KW-0173">Coenzyme A biosynthesis</keyword>
<keyword id="KW-0963">Cytoplasm</keyword>
<keyword id="KW-0418">Kinase</keyword>
<keyword id="KW-0547">Nucleotide-binding</keyword>
<keyword id="KW-1185">Reference proteome</keyword>
<keyword id="KW-0808">Transferase</keyword>
<evidence type="ECO:0000255" key="1">
    <source>
        <dbReference type="HAMAP-Rule" id="MF_00215"/>
    </source>
</evidence>
<protein>
    <recommendedName>
        <fullName evidence="1">Pantothenate kinase</fullName>
        <ecNumber evidence="1">2.7.1.33</ecNumber>
    </recommendedName>
    <alternativeName>
        <fullName evidence="1">Pantothenic acid kinase</fullName>
    </alternativeName>
</protein>
<gene>
    <name evidence="1" type="primary">coaA</name>
    <name type="ordered locus">cauri_0928</name>
</gene>
<dbReference type="EC" id="2.7.1.33" evidence="1"/>
<dbReference type="EMBL" id="CP001601">
    <property type="protein sequence ID" value="ACP32525.1"/>
    <property type="molecule type" value="Genomic_DNA"/>
</dbReference>
<dbReference type="RefSeq" id="WP_010187363.1">
    <property type="nucleotide sequence ID" value="NZ_ACLH01000012.1"/>
</dbReference>
<dbReference type="SMR" id="C3PFC1"/>
<dbReference type="STRING" id="548476.cauri_0928"/>
<dbReference type="GeneID" id="31923553"/>
<dbReference type="KEGG" id="car:cauri_0928"/>
<dbReference type="eggNOG" id="COG1072">
    <property type="taxonomic scope" value="Bacteria"/>
</dbReference>
<dbReference type="HOGENOM" id="CLU_053818_1_1_11"/>
<dbReference type="OrthoDB" id="1550976at2"/>
<dbReference type="UniPathway" id="UPA00241">
    <property type="reaction ID" value="UER00352"/>
</dbReference>
<dbReference type="Proteomes" id="UP000002077">
    <property type="component" value="Chromosome"/>
</dbReference>
<dbReference type="GO" id="GO:0005737">
    <property type="term" value="C:cytoplasm"/>
    <property type="evidence" value="ECO:0007669"/>
    <property type="project" value="UniProtKB-SubCell"/>
</dbReference>
<dbReference type="GO" id="GO:0005524">
    <property type="term" value="F:ATP binding"/>
    <property type="evidence" value="ECO:0007669"/>
    <property type="project" value="UniProtKB-UniRule"/>
</dbReference>
<dbReference type="GO" id="GO:0004594">
    <property type="term" value="F:pantothenate kinase activity"/>
    <property type="evidence" value="ECO:0007669"/>
    <property type="project" value="UniProtKB-UniRule"/>
</dbReference>
<dbReference type="GO" id="GO:0015937">
    <property type="term" value="P:coenzyme A biosynthetic process"/>
    <property type="evidence" value="ECO:0007669"/>
    <property type="project" value="UniProtKB-UniRule"/>
</dbReference>
<dbReference type="CDD" id="cd02025">
    <property type="entry name" value="PanK"/>
    <property type="match status" value="1"/>
</dbReference>
<dbReference type="Gene3D" id="3.40.50.300">
    <property type="entry name" value="P-loop containing nucleotide triphosphate hydrolases"/>
    <property type="match status" value="1"/>
</dbReference>
<dbReference type="HAMAP" id="MF_00215">
    <property type="entry name" value="Pantothen_kinase_1"/>
    <property type="match status" value="1"/>
</dbReference>
<dbReference type="InterPro" id="IPR027417">
    <property type="entry name" value="P-loop_NTPase"/>
</dbReference>
<dbReference type="InterPro" id="IPR004566">
    <property type="entry name" value="PanK"/>
</dbReference>
<dbReference type="InterPro" id="IPR006083">
    <property type="entry name" value="PRK/URK"/>
</dbReference>
<dbReference type="NCBIfam" id="TIGR00554">
    <property type="entry name" value="panK_bact"/>
    <property type="match status" value="1"/>
</dbReference>
<dbReference type="PANTHER" id="PTHR10285">
    <property type="entry name" value="URIDINE KINASE"/>
    <property type="match status" value="1"/>
</dbReference>
<dbReference type="Pfam" id="PF00485">
    <property type="entry name" value="PRK"/>
    <property type="match status" value="1"/>
</dbReference>
<dbReference type="PIRSF" id="PIRSF000545">
    <property type="entry name" value="Pantothenate_kin"/>
    <property type="match status" value="1"/>
</dbReference>
<dbReference type="SUPFAM" id="SSF52540">
    <property type="entry name" value="P-loop containing nucleoside triphosphate hydrolases"/>
    <property type="match status" value="1"/>
</dbReference>
<reference key="1">
    <citation type="journal article" date="2010" name="BMC Genomics">
        <title>Complete genome sequence and lifestyle of black-pigmented Corynebacterium aurimucosum ATCC 700975 (formerly C. nigricans CN-1) isolated from a vaginal swab of a woman with spontaneous abortion.</title>
        <authorList>
            <person name="Trost E."/>
            <person name="Gotker S."/>
            <person name="Schneider J."/>
            <person name="Schneiker-Bekel S."/>
            <person name="Szczepanowski R."/>
            <person name="Tilker A."/>
            <person name="Viehoever P."/>
            <person name="Arnold W."/>
            <person name="Bekel T."/>
            <person name="Blom J."/>
            <person name="Gartemann K.H."/>
            <person name="Linke B."/>
            <person name="Goesmann A."/>
            <person name="Puhler A."/>
            <person name="Shukla S.K."/>
            <person name="Tauch A."/>
        </authorList>
    </citation>
    <scope>NUCLEOTIDE SEQUENCE [LARGE SCALE GENOMIC DNA]</scope>
    <source>
        <strain>ATCC 700975 / DSM 44827 / CIP 107346 / CN-1</strain>
    </source>
</reference>